<feature type="chain" id="PRO_1000082871" description="ATP-dependent RNA helicase RhlB">
    <location>
        <begin position="1"/>
        <end position="421"/>
    </location>
</feature>
<feature type="domain" description="Helicase ATP-binding" evidence="1">
    <location>
        <begin position="40"/>
        <end position="219"/>
    </location>
</feature>
<feature type="domain" description="Helicase C-terminal" evidence="1">
    <location>
        <begin position="245"/>
        <end position="390"/>
    </location>
</feature>
<feature type="region of interest" description="Disordered" evidence="2">
    <location>
        <begin position="392"/>
        <end position="421"/>
    </location>
</feature>
<feature type="short sequence motif" description="Q motif">
    <location>
        <begin position="9"/>
        <end position="37"/>
    </location>
</feature>
<feature type="short sequence motif" description="DEAD box">
    <location>
        <begin position="165"/>
        <end position="168"/>
    </location>
</feature>
<feature type="compositionally biased region" description="Low complexity" evidence="2">
    <location>
        <begin position="402"/>
        <end position="414"/>
    </location>
</feature>
<feature type="binding site" evidence="1">
    <location>
        <begin position="53"/>
        <end position="60"/>
    </location>
    <ligand>
        <name>ATP</name>
        <dbReference type="ChEBI" id="CHEBI:30616"/>
    </ligand>
</feature>
<proteinExistence type="inferred from homology"/>
<evidence type="ECO:0000255" key="1">
    <source>
        <dbReference type="HAMAP-Rule" id="MF_00661"/>
    </source>
</evidence>
<evidence type="ECO:0000256" key="2">
    <source>
        <dbReference type="SAM" id="MobiDB-lite"/>
    </source>
</evidence>
<protein>
    <recommendedName>
        <fullName evidence="1">ATP-dependent RNA helicase RhlB</fullName>
        <ecNumber evidence="1">3.6.4.13</ecNumber>
    </recommendedName>
</protein>
<comment type="function">
    <text evidence="1">DEAD-box RNA helicase involved in RNA degradation. Has RNA-dependent ATPase activity and unwinds double-stranded RNA.</text>
</comment>
<comment type="catalytic activity">
    <reaction evidence="1">
        <text>ATP + H2O = ADP + phosphate + H(+)</text>
        <dbReference type="Rhea" id="RHEA:13065"/>
        <dbReference type="ChEBI" id="CHEBI:15377"/>
        <dbReference type="ChEBI" id="CHEBI:15378"/>
        <dbReference type="ChEBI" id="CHEBI:30616"/>
        <dbReference type="ChEBI" id="CHEBI:43474"/>
        <dbReference type="ChEBI" id="CHEBI:456216"/>
        <dbReference type="EC" id="3.6.4.13"/>
    </reaction>
</comment>
<comment type="subunit">
    <text evidence="1">Component of the RNA degradosome, which is a multiprotein complex involved in RNA processing and mRNA degradation.</text>
</comment>
<comment type="subcellular location">
    <subcellularLocation>
        <location evidence="1">Cytoplasm</location>
    </subcellularLocation>
</comment>
<comment type="similarity">
    <text evidence="1">Belongs to the DEAD box helicase family. RhlB subfamily.</text>
</comment>
<organism>
    <name type="scientific">Shigella boydii serotype 4 (strain Sb227)</name>
    <dbReference type="NCBI Taxonomy" id="300268"/>
    <lineage>
        <taxon>Bacteria</taxon>
        <taxon>Pseudomonadati</taxon>
        <taxon>Pseudomonadota</taxon>
        <taxon>Gammaproteobacteria</taxon>
        <taxon>Enterobacterales</taxon>
        <taxon>Enterobacteriaceae</taxon>
        <taxon>Shigella</taxon>
    </lineage>
</organism>
<reference key="1">
    <citation type="journal article" date="2005" name="Nucleic Acids Res.">
        <title>Genome dynamics and diversity of Shigella species, the etiologic agents of bacillary dysentery.</title>
        <authorList>
            <person name="Yang F."/>
            <person name="Yang J."/>
            <person name="Zhang X."/>
            <person name="Chen L."/>
            <person name="Jiang Y."/>
            <person name="Yan Y."/>
            <person name="Tang X."/>
            <person name="Wang J."/>
            <person name="Xiong Z."/>
            <person name="Dong J."/>
            <person name="Xue Y."/>
            <person name="Zhu Y."/>
            <person name="Xu X."/>
            <person name="Sun L."/>
            <person name="Chen S."/>
            <person name="Nie H."/>
            <person name="Peng J."/>
            <person name="Xu J."/>
            <person name="Wang Y."/>
            <person name="Yuan Z."/>
            <person name="Wen Y."/>
            <person name="Yao Z."/>
            <person name="Shen Y."/>
            <person name="Qiang B."/>
            <person name="Hou Y."/>
            <person name="Yu J."/>
            <person name="Jin Q."/>
        </authorList>
    </citation>
    <scope>NUCLEOTIDE SEQUENCE [LARGE SCALE GENOMIC DNA]</scope>
    <source>
        <strain>Sb227</strain>
    </source>
</reference>
<keyword id="KW-0067">ATP-binding</keyword>
<keyword id="KW-0963">Cytoplasm</keyword>
<keyword id="KW-0347">Helicase</keyword>
<keyword id="KW-0378">Hydrolase</keyword>
<keyword id="KW-0547">Nucleotide-binding</keyword>
<keyword id="KW-0694">RNA-binding</keyword>
<dbReference type="EC" id="3.6.4.13" evidence="1"/>
<dbReference type="EMBL" id="CP000036">
    <property type="protein sequence ID" value="ABB68253.1"/>
    <property type="molecule type" value="Genomic_DNA"/>
</dbReference>
<dbReference type="RefSeq" id="WP_000047518.1">
    <property type="nucleotide sequence ID" value="NC_007613.1"/>
</dbReference>
<dbReference type="SMR" id="Q31UK5"/>
<dbReference type="KEGG" id="sbo:SBO_3790"/>
<dbReference type="HOGENOM" id="CLU_003041_1_3_6"/>
<dbReference type="Proteomes" id="UP000007067">
    <property type="component" value="Chromosome"/>
</dbReference>
<dbReference type="GO" id="GO:0005829">
    <property type="term" value="C:cytosol"/>
    <property type="evidence" value="ECO:0007669"/>
    <property type="project" value="TreeGrafter"/>
</dbReference>
<dbReference type="GO" id="GO:0005524">
    <property type="term" value="F:ATP binding"/>
    <property type="evidence" value="ECO:0007669"/>
    <property type="project" value="UniProtKB-UniRule"/>
</dbReference>
<dbReference type="GO" id="GO:0016887">
    <property type="term" value="F:ATP hydrolysis activity"/>
    <property type="evidence" value="ECO:0007669"/>
    <property type="project" value="RHEA"/>
</dbReference>
<dbReference type="GO" id="GO:0003723">
    <property type="term" value="F:RNA binding"/>
    <property type="evidence" value="ECO:0007669"/>
    <property type="project" value="UniProtKB-UniRule"/>
</dbReference>
<dbReference type="GO" id="GO:0003724">
    <property type="term" value="F:RNA helicase activity"/>
    <property type="evidence" value="ECO:0007669"/>
    <property type="project" value="UniProtKB-UniRule"/>
</dbReference>
<dbReference type="GO" id="GO:0006401">
    <property type="term" value="P:RNA catabolic process"/>
    <property type="evidence" value="ECO:0007669"/>
    <property type="project" value="UniProtKB-UniRule"/>
</dbReference>
<dbReference type="CDD" id="cd00268">
    <property type="entry name" value="DEADc"/>
    <property type="match status" value="1"/>
</dbReference>
<dbReference type="CDD" id="cd18787">
    <property type="entry name" value="SF2_C_DEAD"/>
    <property type="match status" value="1"/>
</dbReference>
<dbReference type="FunFam" id="3.40.50.300:FF:000008">
    <property type="entry name" value="ATP-dependent RNA helicase RhlB"/>
    <property type="match status" value="1"/>
</dbReference>
<dbReference type="FunFam" id="3.40.50.300:FF:000312">
    <property type="entry name" value="ATP-dependent RNA helicase RhlB"/>
    <property type="match status" value="1"/>
</dbReference>
<dbReference type="Gene3D" id="3.40.50.300">
    <property type="entry name" value="P-loop containing nucleotide triphosphate hydrolases"/>
    <property type="match status" value="2"/>
</dbReference>
<dbReference type="HAMAP" id="MF_00661">
    <property type="entry name" value="DEAD_helicase_RhlB"/>
    <property type="match status" value="1"/>
</dbReference>
<dbReference type="InterPro" id="IPR011545">
    <property type="entry name" value="DEAD/DEAH_box_helicase_dom"/>
</dbReference>
<dbReference type="InterPro" id="IPR050079">
    <property type="entry name" value="DEAD_box_RNA_helicase"/>
</dbReference>
<dbReference type="InterPro" id="IPR014001">
    <property type="entry name" value="Helicase_ATP-bd"/>
</dbReference>
<dbReference type="InterPro" id="IPR001650">
    <property type="entry name" value="Helicase_C-like"/>
</dbReference>
<dbReference type="InterPro" id="IPR027417">
    <property type="entry name" value="P-loop_NTPase"/>
</dbReference>
<dbReference type="InterPro" id="IPR000629">
    <property type="entry name" value="RNA-helicase_DEAD-box_CS"/>
</dbReference>
<dbReference type="InterPro" id="IPR023554">
    <property type="entry name" value="RNA_helicase_ATP-dep_RhlB"/>
</dbReference>
<dbReference type="InterPro" id="IPR014014">
    <property type="entry name" value="RNA_helicase_DEAD_Q_motif"/>
</dbReference>
<dbReference type="NCBIfam" id="NF003419">
    <property type="entry name" value="PRK04837.1"/>
    <property type="match status" value="1"/>
</dbReference>
<dbReference type="PANTHER" id="PTHR47959:SF10">
    <property type="entry name" value="ATP-DEPENDENT RNA HELICASE RHLB"/>
    <property type="match status" value="1"/>
</dbReference>
<dbReference type="PANTHER" id="PTHR47959">
    <property type="entry name" value="ATP-DEPENDENT RNA HELICASE RHLE-RELATED"/>
    <property type="match status" value="1"/>
</dbReference>
<dbReference type="Pfam" id="PF00270">
    <property type="entry name" value="DEAD"/>
    <property type="match status" value="1"/>
</dbReference>
<dbReference type="Pfam" id="PF00271">
    <property type="entry name" value="Helicase_C"/>
    <property type="match status" value="1"/>
</dbReference>
<dbReference type="SMART" id="SM00487">
    <property type="entry name" value="DEXDc"/>
    <property type="match status" value="1"/>
</dbReference>
<dbReference type="SMART" id="SM00490">
    <property type="entry name" value="HELICc"/>
    <property type="match status" value="1"/>
</dbReference>
<dbReference type="SUPFAM" id="SSF52540">
    <property type="entry name" value="P-loop containing nucleoside triphosphate hydrolases"/>
    <property type="match status" value="1"/>
</dbReference>
<dbReference type="PROSITE" id="PS00039">
    <property type="entry name" value="DEAD_ATP_HELICASE"/>
    <property type="match status" value="1"/>
</dbReference>
<dbReference type="PROSITE" id="PS51192">
    <property type="entry name" value="HELICASE_ATP_BIND_1"/>
    <property type="match status" value="1"/>
</dbReference>
<dbReference type="PROSITE" id="PS51194">
    <property type="entry name" value="HELICASE_CTER"/>
    <property type="match status" value="1"/>
</dbReference>
<dbReference type="PROSITE" id="PS51195">
    <property type="entry name" value="Q_MOTIF"/>
    <property type="match status" value="1"/>
</dbReference>
<sequence>MSKTHLTEQKFSDFALHPKVVEVLEKKGFHNCTPIQALALPLTLAGRDVAGQAQTGTGKTMAFLTSTFHYLLSHPAIADRKVNQPRALIMAPTRELAVQIHADAEPLAEATGLKLGLAYGGDGYDKQLKVLESGVDILIGTTGRLIDYAKQNHINLGAIQVVVLDEADRMYDLGFIKDIRWLFRRMPPANQRLNMLFSATLSYRVRELAFEQMNNAEYIEVEPEQKTGHRIKEELFYPSNEEKMRLLQTLIEEEWPDRAIIFANTKHRCEEIWGHLAADGHRVGLLTGDVAQKKRLRILDEFTRGDLDILVATDVAARGLHIPAVTHVFNYDLPDDCEDYVHRIGRTGRAGASGHSISLACEEYALNLPAIETYIGHSIPVSKYNPDALMTDLPKPLRLTRPRTGNGPRRTGAPRNRRRSG</sequence>
<accession>Q31UK5</accession>
<gene>
    <name evidence="1" type="primary">rhlB</name>
    <name type="ordered locus">SBO_3790</name>
</gene>
<name>RHLB_SHIBS</name>